<keyword id="KW-0002">3D-structure</keyword>
<keyword id="KW-0044">Antibiotic</keyword>
<keyword id="KW-0929">Antimicrobial</keyword>
<keyword id="KW-0053">Apoptosis</keyword>
<keyword id="KW-0204">Cytolysis</keyword>
<keyword id="KW-0903">Direct protein sequencing</keyword>
<keyword id="KW-1015">Disulfide bond</keyword>
<keyword id="KW-0274">FAD</keyword>
<keyword id="KW-0285">Flavoprotein</keyword>
<keyword id="KW-0325">Glycoprotein</keyword>
<keyword id="KW-0354">Hemolysis</keyword>
<keyword id="KW-1200">Hemorrhagic toxin</keyword>
<keyword id="KW-1199">Hemostasis impairing toxin</keyword>
<keyword id="KW-0560">Oxidoreductase</keyword>
<keyword id="KW-0964">Secreted</keyword>
<keyword id="KW-0732">Signal</keyword>
<keyword id="KW-0800">Toxin</keyword>
<proteinExistence type="evidence at protein level"/>
<dbReference type="EC" id="1.4.3.2" evidence="3"/>
<dbReference type="EMBL" id="AY450403">
    <property type="protein sequence ID" value="AAR20248.1"/>
    <property type="molecule type" value="mRNA"/>
</dbReference>
<dbReference type="PDB" id="1REO">
    <property type="method" value="X-ray"/>
    <property type="resolution" value="2.31 A"/>
    <property type="chains" value="A=19-504"/>
</dbReference>
<dbReference type="PDB" id="1TDK">
    <property type="method" value="X-ray"/>
    <property type="resolution" value="2.70 A"/>
    <property type="chains" value="A=19-504"/>
</dbReference>
<dbReference type="PDB" id="1TDN">
    <property type="method" value="X-ray"/>
    <property type="resolution" value="2.70 A"/>
    <property type="chains" value="A=19-504"/>
</dbReference>
<dbReference type="PDB" id="1TDO">
    <property type="method" value="X-ray"/>
    <property type="resolution" value="3.00 A"/>
    <property type="chains" value="A=19-504"/>
</dbReference>
<dbReference type="PDBsum" id="1REO"/>
<dbReference type="PDBsum" id="1TDK"/>
<dbReference type="PDBsum" id="1TDN"/>
<dbReference type="PDBsum" id="1TDO"/>
<dbReference type="SMR" id="Q6STF1"/>
<dbReference type="iPTMnet" id="Q6STF1"/>
<dbReference type="EvolutionaryTrace" id="Q6STF1"/>
<dbReference type="GO" id="GO:0005576">
    <property type="term" value="C:extracellular region"/>
    <property type="evidence" value="ECO:0007669"/>
    <property type="project" value="UniProtKB-SubCell"/>
</dbReference>
<dbReference type="GO" id="GO:0001716">
    <property type="term" value="F:L-amino-acid oxidase activity"/>
    <property type="evidence" value="ECO:0007669"/>
    <property type="project" value="UniProtKB-EC"/>
</dbReference>
<dbReference type="GO" id="GO:0090729">
    <property type="term" value="F:toxin activity"/>
    <property type="evidence" value="ECO:0007669"/>
    <property type="project" value="UniProtKB-KW"/>
</dbReference>
<dbReference type="GO" id="GO:0009063">
    <property type="term" value="P:amino acid catabolic process"/>
    <property type="evidence" value="ECO:0007669"/>
    <property type="project" value="TreeGrafter"/>
</dbReference>
<dbReference type="GO" id="GO:0006915">
    <property type="term" value="P:apoptotic process"/>
    <property type="evidence" value="ECO:0007669"/>
    <property type="project" value="UniProtKB-KW"/>
</dbReference>
<dbReference type="GO" id="GO:0042742">
    <property type="term" value="P:defense response to bacterium"/>
    <property type="evidence" value="ECO:0007669"/>
    <property type="project" value="UniProtKB-KW"/>
</dbReference>
<dbReference type="GO" id="GO:0031640">
    <property type="term" value="P:killing of cells of another organism"/>
    <property type="evidence" value="ECO:0007669"/>
    <property type="project" value="UniProtKB-KW"/>
</dbReference>
<dbReference type="FunFam" id="1.10.405.10:FF:000004">
    <property type="entry name" value="Amine oxidase"/>
    <property type="match status" value="1"/>
</dbReference>
<dbReference type="FunFam" id="3.50.50.60:FF:000450">
    <property type="entry name" value="Amine oxidase"/>
    <property type="match status" value="1"/>
</dbReference>
<dbReference type="Gene3D" id="3.90.660.10">
    <property type="match status" value="1"/>
</dbReference>
<dbReference type="Gene3D" id="3.50.50.60">
    <property type="entry name" value="FAD/NAD(P)-binding domain"/>
    <property type="match status" value="1"/>
</dbReference>
<dbReference type="Gene3D" id="1.10.405.10">
    <property type="entry name" value="Guanine Nucleotide Dissociation Inhibitor, domain 1"/>
    <property type="match status" value="1"/>
</dbReference>
<dbReference type="InterPro" id="IPR002937">
    <property type="entry name" value="Amino_oxidase"/>
</dbReference>
<dbReference type="InterPro" id="IPR036188">
    <property type="entry name" value="FAD/NAD-bd_sf"/>
</dbReference>
<dbReference type="InterPro" id="IPR050281">
    <property type="entry name" value="Flavin_monoamine_oxidase"/>
</dbReference>
<dbReference type="PANTHER" id="PTHR10742:SF355">
    <property type="entry name" value="AMINE OXIDASE"/>
    <property type="match status" value="1"/>
</dbReference>
<dbReference type="PANTHER" id="PTHR10742">
    <property type="entry name" value="FLAVIN MONOAMINE OXIDASE"/>
    <property type="match status" value="1"/>
</dbReference>
<dbReference type="Pfam" id="PF01593">
    <property type="entry name" value="Amino_oxidase"/>
    <property type="match status" value="1"/>
</dbReference>
<dbReference type="SUPFAM" id="SSF54373">
    <property type="entry name" value="FAD-linked reductases, C-terminal domain"/>
    <property type="match status" value="1"/>
</dbReference>
<dbReference type="SUPFAM" id="SSF51905">
    <property type="entry name" value="FAD/NAD(P)-binding domain"/>
    <property type="match status" value="1"/>
</dbReference>
<reference key="1">
    <citation type="submission" date="2003-10" db="EMBL/GenBank/DDBJ databases">
        <authorList>
            <person name="Zhang H."/>
            <person name="Zhang T."/>
            <person name="Teng M."/>
            <person name="Niu L."/>
        </authorList>
    </citation>
    <scope>NUCLEOTIDE SEQUENCE [MRNA]</scope>
    <source>
        <tissue>Venom gland</tissue>
    </source>
</reference>
<reference evidence="8" key="2">
    <citation type="journal article" date="2004" name="Acta Crystallogr. D">
        <title>Purification, partial characterization, crystallization and structural determination of AHP-LAAO, a novel L-amino-acid oxidase with cell apoptosis-inducing activity from Agkistrodon halys pallas venom.</title>
        <authorList>
            <person name="Zhang H."/>
            <person name="Teng M."/>
            <person name="Niu L."/>
            <person name="Wang Y."/>
            <person name="Wang Y."/>
            <person name="Liu Q."/>
            <person name="Huang Q."/>
            <person name="Hao Q."/>
            <person name="Dong Y."/>
            <person name="Liu P."/>
        </authorList>
    </citation>
    <scope>X-RAY CRYSTALLOGRAPHY (2.31 ANGSTROMS) OF 19-504 IN COMPLEX WITH FAD</scope>
    <scope>PARTIAL PROTEIN SEQUENCE</scope>
    <scope>DISULFIDE BONDS</scope>
    <scope>GLYCOSYLATION AT ASN-190 AND ASN-379</scope>
    <scope>FUNCTION</scope>
    <scope>IDENTIFICATION BY MASS SPECTROMETRY</scope>
    <scope>SUBCELLULAR LOCATION</scope>
    <scope>CATALYTIC ACTIVITY</scope>
    <scope>COFACTOR</scope>
    <scope>BIOPHYSICOCHEMICAL PROPERTIES</scope>
    <source>
        <tissue>Venom</tissue>
    </source>
</reference>
<reference key="3">
    <citation type="submission" date="2004-05" db="PDB data bank">
        <title>Structures of L-amino acid oxidase in complex with substrates and substrate analogue.</title>
        <authorList>
            <person name="Zhang H."/>
            <person name="Teng M."/>
            <person name="Niu L."/>
        </authorList>
    </citation>
    <scope>X-RAY CRYSTALLOGRAPHY (2.7 ANGSTROMS) OF 19-504 IN COMPLEX WITH FAD AND SUBSTRATE ANALOGS</scope>
    <scope>DISULFIDE BONDS</scope>
    <scope>GLYCOSYLATION AT ASN-190 AND ASN-379</scope>
</reference>
<organism>
    <name type="scientific">Gloydius halys</name>
    <name type="common">Chinese water mocassin</name>
    <name type="synonym">Agkistrodon halys</name>
    <dbReference type="NCBI Taxonomy" id="8714"/>
    <lineage>
        <taxon>Eukaryota</taxon>
        <taxon>Metazoa</taxon>
        <taxon>Chordata</taxon>
        <taxon>Craniata</taxon>
        <taxon>Vertebrata</taxon>
        <taxon>Euteleostomi</taxon>
        <taxon>Lepidosauria</taxon>
        <taxon>Squamata</taxon>
        <taxon>Bifurcata</taxon>
        <taxon>Unidentata</taxon>
        <taxon>Episquamata</taxon>
        <taxon>Toxicofera</taxon>
        <taxon>Serpentes</taxon>
        <taxon>Colubroidea</taxon>
        <taxon>Viperidae</taxon>
        <taxon>Crotalinae</taxon>
        <taxon>Gloydius</taxon>
    </lineage>
</organism>
<evidence type="ECO:0000250" key="1">
    <source>
        <dbReference type="UniProtKB" id="P0CC17"/>
    </source>
</evidence>
<evidence type="ECO:0000250" key="2">
    <source>
        <dbReference type="UniProtKB" id="P81382"/>
    </source>
</evidence>
<evidence type="ECO:0000269" key="3">
    <source>
    </source>
</evidence>
<evidence type="ECO:0000269" key="4">
    <source ref="3"/>
</evidence>
<evidence type="ECO:0000303" key="5">
    <source>
    </source>
</evidence>
<evidence type="ECO:0000305" key="6"/>
<evidence type="ECO:0000305" key="7">
    <source>
    </source>
</evidence>
<evidence type="ECO:0000312" key="8">
    <source>
        <dbReference type="PDB" id="1REO"/>
    </source>
</evidence>
<evidence type="ECO:0007744" key="9">
    <source>
        <dbReference type="PDB" id="1TDK"/>
    </source>
</evidence>
<evidence type="ECO:0007744" key="10">
    <source>
        <dbReference type="PDB" id="1TDN"/>
    </source>
</evidence>
<evidence type="ECO:0007744" key="11">
    <source>
        <dbReference type="PDB" id="1TDO"/>
    </source>
</evidence>
<evidence type="ECO:0007829" key="12">
    <source>
        <dbReference type="PDB" id="1REO"/>
    </source>
</evidence>
<evidence type="ECO:0007829" key="13">
    <source>
        <dbReference type="PDB" id="1TDN"/>
    </source>
</evidence>
<evidence type="ECO:0007829" key="14">
    <source>
        <dbReference type="PDB" id="1TDO"/>
    </source>
</evidence>
<accession>Q6STF1</accession>
<name>OXLA_GLOHA</name>
<comment type="function">
    <text evidence="1 3">Catalyzes an oxidative deamination of predominantly hydrophobic and aromatic L-amino acids, thus producing hydrogen peroxide that may contribute to the diverse toxic effects of this enzyme (PubMed:15103157). Shows activity on L-Leu (PubMed:15103157). Exhibits diverse biological activities, such as hemorrhage, hemolysis, edema, antibacterial and antiparasitic activities, as well as regulation of platelet aggregation (By similarity). Its effect on platelets is controversial, since it either induces aggregation or inhibits agonist-induced aggregation (By similarity). These different effects are probably due to different experimental conditions (By similarity). This protein induces apoptosis of cultured HeLa cells (PubMed:15103157).</text>
</comment>
<comment type="catalytic activity">
    <reaction evidence="3">
        <text>an L-alpha-amino acid + O2 + H2O = a 2-oxocarboxylate + H2O2 + NH4(+)</text>
        <dbReference type="Rhea" id="RHEA:13781"/>
        <dbReference type="ChEBI" id="CHEBI:15377"/>
        <dbReference type="ChEBI" id="CHEBI:15379"/>
        <dbReference type="ChEBI" id="CHEBI:16240"/>
        <dbReference type="ChEBI" id="CHEBI:28938"/>
        <dbReference type="ChEBI" id="CHEBI:35179"/>
        <dbReference type="ChEBI" id="CHEBI:59869"/>
        <dbReference type="EC" id="1.4.3.2"/>
    </reaction>
</comment>
<comment type="catalytic activity">
    <reaction evidence="3">
        <text>L-leucine + O2 + H2O = 4-methyl-2-oxopentanoate + H2O2 + NH4(+)</text>
        <dbReference type="Rhea" id="RHEA:60996"/>
        <dbReference type="ChEBI" id="CHEBI:15377"/>
        <dbReference type="ChEBI" id="CHEBI:15379"/>
        <dbReference type="ChEBI" id="CHEBI:16240"/>
        <dbReference type="ChEBI" id="CHEBI:17865"/>
        <dbReference type="ChEBI" id="CHEBI:28938"/>
        <dbReference type="ChEBI" id="CHEBI:57427"/>
    </reaction>
</comment>
<comment type="cofactor">
    <cofactor evidence="3">
        <name>FAD</name>
        <dbReference type="ChEBI" id="CHEBI:57692"/>
    </cofactor>
</comment>
<comment type="biophysicochemical properties">
    <kinetics>
        <KM evidence="3">0.25 mM for L-Leu</KM>
    </kinetics>
    <phDependence>
        <text evidence="3">Optimum pH is 8.8.</text>
    </phDependence>
</comment>
<comment type="subunit">
    <text evidence="2">Homodimer; non-covalently linked.</text>
</comment>
<comment type="subcellular location">
    <subcellularLocation>
        <location evidence="3">Secreted</location>
    </subcellularLocation>
</comment>
<comment type="tissue specificity">
    <text evidence="7">Expressed by the venom gland.</text>
</comment>
<comment type="similarity">
    <text evidence="6">Belongs to the flavin monoamine oxidase family. FIG1 subfamily.</text>
</comment>
<feature type="signal peptide" evidence="3">
    <location>
        <begin position="1"/>
        <end position="18"/>
    </location>
</feature>
<feature type="chain" id="PRO_0000273563" description="L-amino-acid oxidase">
    <location>
        <begin position="19"/>
        <end position="504"/>
    </location>
</feature>
<feature type="binding site" evidence="3 4">
    <location>
        <begin position="61"/>
        <end position="62"/>
    </location>
    <ligand>
        <name>FAD</name>
        <dbReference type="ChEBI" id="CHEBI:57692"/>
    </ligand>
</feature>
<feature type="binding site" evidence="3 4">
    <location>
        <begin position="81"/>
        <end position="82"/>
    </location>
    <ligand>
        <name>FAD</name>
        <dbReference type="ChEBI" id="CHEBI:57692"/>
    </ligand>
</feature>
<feature type="binding site" evidence="3 4">
    <location>
        <position position="89"/>
    </location>
    <ligand>
        <name>FAD</name>
        <dbReference type="ChEBI" id="CHEBI:57692"/>
    </ligand>
</feature>
<feature type="binding site" evidence="3 4">
    <location>
        <begin position="105"/>
        <end position="108"/>
    </location>
    <ligand>
        <name>FAD</name>
        <dbReference type="ChEBI" id="CHEBI:57692"/>
    </ligand>
</feature>
<feature type="binding site" evidence="4 9 10 11">
    <location>
        <position position="108"/>
    </location>
    <ligand>
        <name>substrate</name>
    </ligand>
</feature>
<feature type="binding site" evidence="4 9">
    <location>
        <position position="241"/>
    </location>
    <ligand>
        <name>substrate</name>
    </ligand>
</feature>
<feature type="binding site" evidence="3 4">
    <location>
        <position position="279"/>
    </location>
    <ligand>
        <name>FAD</name>
        <dbReference type="ChEBI" id="CHEBI:57692"/>
    </ligand>
</feature>
<feature type="binding site" evidence="4 10">
    <location>
        <position position="390"/>
    </location>
    <ligand>
        <name>substrate</name>
    </ligand>
</feature>
<feature type="binding site" evidence="3 4">
    <location>
        <position position="475"/>
    </location>
    <ligand>
        <name>FAD</name>
        <dbReference type="ChEBI" id="CHEBI:57692"/>
    </ligand>
</feature>
<feature type="binding site" evidence="3 4">
    <location>
        <begin position="482"/>
        <end position="487"/>
    </location>
    <ligand>
        <name>FAD</name>
        <dbReference type="ChEBI" id="CHEBI:57692"/>
    </ligand>
</feature>
<feature type="binding site" evidence="2">
    <location>
        <begin position="482"/>
        <end position="483"/>
    </location>
    <ligand>
        <name>substrate</name>
    </ligand>
</feature>
<feature type="glycosylation site" description="N-linked (GlcNAc...) asparagine" evidence="3 4">
    <location>
        <position position="190"/>
    </location>
</feature>
<feature type="glycosylation site" description="N-linked (GlcNAc...) asparagine" evidence="3 4">
    <location>
        <position position="379"/>
    </location>
</feature>
<feature type="disulfide bond" evidence="3 4">
    <location>
        <begin position="28"/>
        <end position="191"/>
    </location>
</feature>
<feature type="disulfide bond" evidence="3 4">
    <location>
        <begin position="349"/>
        <end position="430"/>
    </location>
</feature>
<feature type="helix" evidence="12">
    <location>
        <begin position="26"/>
        <end position="29"/>
    </location>
</feature>
<feature type="helix" evidence="12">
    <location>
        <begin position="34"/>
        <end position="43"/>
    </location>
</feature>
<feature type="strand" evidence="12">
    <location>
        <begin position="53"/>
        <end position="57"/>
    </location>
</feature>
<feature type="helix" evidence="12">
    <location>
        <begin position="61"/>
        <end position="72"/>
    </location>
</feature>
<feature type="strand" evidence="12">
    <location>
        <begin position="76"/>
        <end position="80"/>
    </location>
</feature>
<feature type="strand" evidence="12">
    <location>
        <begin position="82"/>
        <end position="86"/>
    </location>
</feature>
<feature type="strand" evidence="12">
    <location>
        <begin position="92"/>
        <end position="95"/>
    </location>
</feature>
<feature type="turn" evidence="12">
    <location>
        <begin position="96"/>
        <end position="99"/>
    </location>
</feature>
<feature type="strand" evidence="12">
    <location>
        <begin position="100"/>
        <end position="105"/>
    </location>
</feature>
<feature type="strand" evidence="13">
    <location>
        <begin position="109"/>
        <end position="112"/>
    </location>
</feature>
<feature type="helix" evidence="12">
    <location>
        <begin position="114"/>
        <end position="122"/>
    </location>
</feature>
<feature type="strand" evidence="12">
    <location>
        <begin position="127"/>
        <end position="129"/>
    </location>
</feature>
<feature type="strand" evidence="12">
    <location>
        <begin position="137"/>
        <end position="141"/>
    </location>
</feature>
<feature type="strand" evidence="12">
    <location>
        <begin position="144"/>
        <end position="147"/>
    </location>
</feature>
<feature type="helix" evidence="12">
    <location>
        <begin position="148"/>
        <end position="153"/>
    </location>
</feature>
<feature type="helix" evidence="12">
    <location>
        <begin position="155"/>
        <end position="158"/>
    </location>
</feature>
<feature type="helix" evidence="12">
    <location>
        <begin position="164"/>
        <end position="166"/>
    </location>
</feature>
<feature type="helix" evidence="12">
    <location>
        <begin position="171"/>
        <end position="178"/>
    </location>
</feature>
<feature type="helix" evidence="12">
    <location>
        <begin position="180"/>
        <end position="188"/>
    </location>
</feature>
<feature type="helix" evidence="12">
    <location>
        <begin position="191"/>
        <end position="197"/>
    </location>
</feature>
<feature type="helix" evidence="12">
    <location>
        <begin position="198"/>
        <end position="200"/>
    </location>
</feature>
<feature type="helix" evidence="12">
    <location>
        <begin position="203"/>
        <end position="209"/>
    </location>
</feature>
<feature type="helix" evidence="12">
    <location>
        <begin position="215"/>
        <end position="224"/>
    </location>
</feature>
<feature type="helix" evidence="12">
    <location>
        <begin position="228"/>
        <end position="230"/>
    </location>
</feature>
<feature type="strand" evidence="14">
    <location>
        <begin position="231"/>
        <end position="234"/>
    </location>
</feature>
<feature type="helix" evidence="12">
    <location>
        <begin position="235"/>
        <end position="245"/>
    </location>
</feature>
<feature type="strand" evidence="12">
    <location>
        <begin position="251"/>
        <end position="254"/>
    </location>
</feature>
<feature type="helix" evidence="12">
    <location>
        <begin position="260"/>
        <end position="268"/>
    </location>
</feature>
<feature type="helix" evidence="12">
    <location>
        <begin position="269"/>
        <end position="272"/>
    </location>
</feature>
<feature type="strand" evidence="12">
    <location>
        <begin position="273"/>
        <end position="276"/>
    </location>
</feature>
<feature type="strand" evidence="12">
    <location>
        <begin position="278"/>
        <end position="285"/>
    </location>
</feature>
<feature type="strand" evidence="12">
    <location>
        <begin position="288"/>
        <end position="294"/>
    </location>
</feature>
<feature type="strand" evidence="12">
    <location>
        <begin position="296"/>
        <end position="298"/>
    </location>
</feature>
<feature type="strand" evidence="12">
    <location>
        <begin position="300"/>
        <end position="310"/>
    </location>
</feature>
<feature type="helix" evidence="12">
    <location>
        <begin position="314"/>
        <end position="318"/>
    </location>
</feature>
<feature type="strand" evidence="12">
    <location>
        <begin position="320"/>
        <end position="324"/>
    </location>
</feature>
<feature type="helix" evidence="12">
    <location>
        <begin position="328"/>
        <end position="336"/>
    </location>
</feature>
<feature type="strand" evidence="12">
    <location>
        <begin position="342"/>
        <end position="351"/>
    </location>
</feature>
<feature type="helix" evidence="12">
    <location>
        <begin position="353"/>
        <end position="357"/>
    </location>
</feature>
<feature type="strand" evidence="12">
    <location>
        <begin position="363"/>
        <end position="368"/>
    </location>
</feature>
<feature type="strand" evidence="12">
    <location>
        <begin position="372"/>
        <end position="374"/>
    </location>
</feature>
<feature type="strand" evidence="12">
    <location>
        <begin position="385"/>
        <end position="392"/>
    </location>
</feature>
<feature type="helix" evidence="12">
    <location>
        <begin position="393"/>
        <end position="397"/>
    </location>
</feature>
<feature type="turn" evidence="12">
    <location>
        <begin position="398"/>
        <end position="401"/>
    </location>
</feature>
<feature type="helix" evidence="12">
    <location>
        <begin position="404"/>
        <end position="419"/>
    </location>
</feature>
<feature type="helix" evidence="12">
    <location>
        <begin position="423"/>
        <end position="429"/>
    </location>
</feature>
<feature type="strand" evidence="12">
    <location>
        <begin position="430"/>
        <end position="437"/>
    </location>
</feature>
<feature type="helix" evidence="12">
    <location>
        <begin position="438"/>
        <end position="440"/>
    </location>
</feature>
<feature type="turn" evidence="12">
    <location>
        <begin position="442"/>
        <end position="444"/>
    </location>
</feature>
<feature type="strand" evidence="12">
    <location>
        <begin position="446"/>
        <end position="449"/>
    </location>
</feature>
<feature type="helix" evidence="12">
    <location>
        <begin position="455"/>
        <end position="464"/>
    </location>
</feature>
<feature type="strand" evidence="12">
    <location>
        <begin position="470"/>
        <end position="472"/>
    </location>
</feature>
<feature type="helix" evidence="12">
    <location>
        <begin position="475"/>
        <end position="477"/>
    </location>
</feature>
<feature type="strand" evidence="12">
    <location>
        <begin position="478"/>
        <end position="480"/>
    </location>
</feature>
<feature type="helix" evidence="12">
    <location>
        <begin position="484"/>
        <end position="503"/>
    </location>
</feature>
<protein>
    <recommendedName>
        <fullName evidence="5">L-amino-acid oxidase</fullName>
        <shortName evidence="5">AHP-LAAO</shortName>
        <shortName>LAO</shortName>
        <ecNumber evidence="3">1.4.3.2</ecNumber>
    </recommendedName>
</protein>
<sequence length="504" mass="57125">MNVFFMFSLLFLAALGSCANDRNPLEECFRETDYEEFLEIARNGLKATSNPKHVVVVGAGMSGLSAAYVLSGAGHQVTVLEASERAGGRVRTYRNDKEDWYANLGPMRLPEKHRIVREYIRKFGLQLNEFSQENDNAWYFIKNIRKRVGEVKKDPGVLKYPVKPSEEGKSAGQLYEESLGKVVEELKRTNCSYILNKYDTYSTKEYLLKEGNLSPGAVDMIGDLMNEDSGYYVSFPESLRHDDIFAYEKRFDEIVGGMDKLPTSMYRAIEEKVHLNAQVIKIQKNAEKVTVVYQTPAKEMASVTADYVIVCTTSRATRRIKFEPPLPPKKAHALRSVHYRSGTKIFLTCTKKFWEDEGIHGGKSTTDLPSRFIYYPNHNFTSGVGVIIAYGIGDDANFFQALDFKDCADIVINDLSLIHQLPREEIQTFCYPSMIQKWSLDKYAMGGITTFTPYQFQHFSESLTASVDRIYFAGEHTAEAHGWIDSTIKSGLRAARDVNRASEQ</sequence>